<accession>D4DLA2</accession>
<comment type="function">
    <text evidence="1">Secreted subtilisin-like serine protease with keratinolytic activity that contributes to pathogenicity.</text>
</comment>
<comment type="subcellular location">
    <subcellularLocation>
        <location evidence="1">Secreted</location>
    </subcellularLocation>
</comment>
<comment type="similarity">
    <text evidence="4">Belongs to the peptidase S8 family.</text>
</comment>
<name>SUB3_TRIVH</name>
<protein>
    <recommendedName>
        <fullName>Subtilisin-like protease 3</fullName>
        <ecNumber>3.4.21.-</ecNumber>
    </recommendedName>
</protein>
<feature type="signal peptide" evidence="2">
    <location>
        <begin position="1"/>
        <end position="19"/>
    </location>
</feature>
<feature type="propeptide" id="PRO_0000397788" evidence="1">
    <location>
        <begin position="20"/>
        <end position="116"/>
    </location>
</feature>
<feature type="chain" id="PRO_0000397789" description="Subtilisin-like protease 3">
    <location>
        <begin position="117"/>
        <end position="397"/>
    </location>
</feature>
<feature type="domain" description="Inhibitor I9" evidence="2">
    <location>
        <begin position="35"/>
        <end position="116"/>
    </location>
</feature>
<feature type="domain" description="Peptidase S8" evidence="3">
    <location>
        <begin position="126"/>
        <end position="397"/>
    </location>
</feature>
<feature type="active site" description="Charge relay system" evidence="3">
    <location>
        <position position="158"/>
    </location>
</feature>
<feature type="active site" description="Charge relay system" evidence="3">
    <location>
        <position position="189"/>
    </location>
</feature>
<feature type="active site" description="Charge relay system" evidence="3">
    <location>
        <position position="344"/>
    </location>
</feature>
<feature type="glycosylation site" description="N-linked (GlcNAc...) asparagine" evidence="2">
    <location>
        <position position="250"/>
    </location>
</feature>
<feature type="glycosylation site" description="N-linked (GlcNAc...) asparagine" evidence="2">
    <location>
        <position position="393"/>
    </location>
</feature>
<proteinExistence type="inferred from homology"/>
<reference key="1">
    <citation type="journal article" date="2011" name="Genome Biol.">
        <title>Comparative and functional genomics provide insights into the pathogenicity of dermatophytic fungi.</title>
        <authorList>
            <person name="Burmester A."/>
            <person name="Shelest E."/>
            <person name="Gloeckner G."/>
            <person name="Heddergott C."/>
            <person name="Schindler S."/>
            <person name="Staib P."/>
            <person name="Heidel A."/>
            <person name="Felder M."/>
            <person name="Petzold A."/>
            <person name="Szafranski K."/>
            <person name="Feuermann M."/>
            <person name="Pedruzzi I."/>
            <person name="Priebe S."/>
            <person name="Groth M."/>
            <person name="Winkler R."/>
            <person name="Li W."/>
            <person name="Kniemeyer O."/>
            <person name="Schroeckh V."/>
            <person name="Hertweck C."/>
            <person name="Hube B."/>
            <person name="White T.C."/>
            <person name="Platzer M."/>
            <person name="Guthke R."/>
            <person name="Heitman J."/>
            <person name="Woestemeyer J."/>
            <person name="Zipfel P.F."/>
            <person name="Monod M."/>
            <person name="Brakhage A.A."/>
        </authorList>
    </citation>
    <scope>NUCLEOTIDE SEQUENCE [LARGE SCALE GENOMIC DNA]</scope>
    <source>
        <strain>HKI 0517</strain>
    </source>
</reference>
<dbReference type="EC" id="3.4.21.-"/>
<dbReference type="EMBL" id="ACYE01000498">
    <property type="protein sequence ID" value="EFE37368.1"/>
    <property type="molecule type" value="Genomic_DNA"/>
</dbReference>
<dbReference type="RefSeq" id="XP_003018013.1">
    <property type="nucleotide sequence ID" value="XM_003017967.1"/>
</dbReference>
<dbReference type="SMR" id="D4DLA2"/>
<dbReference type="GlyCosmos" id="D4DLA2">
    <property type="glycosylation" value="2 sites, No reported glycans"/>
</dbReference>
<dbReference type="GeneID" id="9579144"/>
<dbReference type="KEGG" id="tve:TRV_07976"/>
<dbReference type="HOGENOM" id="CLU_011263_1_3_1"/>
<dbReference type="OrthoDB" id="5281at34384"/>
<dbReference type="Proteomes" id="UP000008383">
    <property type="component" value="Unassembled WGS sequence"/>
</dbReference>
<dbReference type="GO" id="GO:0005576">
    <property type="term" value="C:extracellular region"/>
    <property type="evidence" value="ECO:0007669"/>
    <property type="project" value="UniProtKB-SubCell"/>
</dbReference>
<dbReference type="GO" id="GO:0004252">
    <property type="term" value="F:serine-type endopeptidase activity"/>
    <property type="evidence" value="ECO:0007669"/>
    <property type="project" value="InterPro"/>
</dbReference>
<dbReference type="GO" id="GO:0006508">
    <property type="term" value="P:proteolysis"/>
    <property type="evidence" value="ECO:0007669"/>
    <property type="project" value="UniProtKB-KW"/>
</dbReference>
<dbReference type="CDD" id="cd04077">
    <property type="entry name" value="Peptidases_S8_PCSK9_ProteinaseK_like"/>
    <property type="match status" value="1"/>
</dbReference>
<dbReference type="FunFam" id="3.40.50.200:FF:000014">
    <property type="entry name" value="Proteinase K"/>
    <property type="match status" value="1"/>
</dbReference>
<dbReference type="Gene3D" id="3.30.70.80">
    <property type="entry name" value="Peptidase S8 propeptide/proteinase inhibitor I9"/>
    <property type="match status" value="1"/>
</dbReference>
<dbReference type="Gene3D" id="3.40.50.200">
    <property type="entry name" value="Peptidase S8/S53 domain"/>
    <property type="match status" value="1"/>
</dbReference>
<dbReference type="InterPro" id="IPR034193">
    <property type="entry name" value="PCSK9_ProteinaseK-like"/>
</dbReference>
<dbReference type="InterPro" id="IPR000209">
    <property type="entry name" value="Peptidase_S8/S53_dom"/>
</dbReference>
<dbReference type="InterPro" id="IPR036852">
    <property type="entry name" value="Peptidase_S8/S53_dom_sf"/>
</dbReference>
<dbReference type="InterPro" id="IPR023828">
    <property type="entry name" value="Peptidase_S8_Ser-AS"/>
</dbReference>
<dbReference type="InterPro" id="IPR050131">
    <property type="entry name" value="Peptidase_S8_subtilisin-like"/>
</dbReference>
<dbReference type="InterPro" id="IPR015500">
    <property type="entry name" value="Peptidase_S8_subtilisin-rel"/>
</dbReference>
<dbReference type="InterPro" id="IPR010259">
    <property type="entry name" value="S8pro/Inhibitor_I9"/>
</dbReference>
<dbReference type="InterPro" id="IPR037045">
    <property type="entry name" value="S8pro/Inhibitor_I9_sf"/>
</dbReference>
<dbReference type="PANTHER" id="PTHR43806:SF11">
    <property type="entry name" value="CEREVISIN-RELATED"/>
    <property type="match status" value="1"/>
</dbReference>
<dbReference type="PANTHER" id="PTHR43806">
    <property type="entry name" value="PEPTIDASE S8"/>
    <property type="match status" value="1"/>
</dbReference>
<dbReference type="Pfam" id="PF05922">
    <property type="entry name" value="Inhibitor_I9"/>
    <property type="match status" value="1"/>
</dbReference>
<dbReference type="Pfam" id="PF00082">
    <property type="entry name" value="Peptidase_S8"/>
    <property type="match status" value="1"/>
</dbReference>
<dbReference type="PRINTS" id="PR00723">
    <property type="entry name" value="SUBTILISIN"/>
</dbReference>
<dbReference type="SUPFAM" id="SSF54897">
    <property type="entry name" value="Protease propeptides/inhibitors"/>
    <property type="match status" value="1"/>
</dbReference>
<dbReference type="SUPFAM" id="SSF52743">
    <property type="entry name" value="Subtilisin-like"/>
    <property type="match status" value="1"/>
</dbReference>
<dbReference type="PROSITE" id="PS51892">
    <property type="entry name" value="SUBTILASE"/>
    <property type="match status" value="1"/>
</dbReference>
<dbReference type="PROSITE" id="PS00138">
    <property type="entry name" value="SUBTILASE_SER"/>
    <property type="match status" value="1"/>
</dbReference>
<organism>
    <name type="scientific">Trichophyton verrucosum (strain HKI 0517)</name>
    <dbReference type="NCBI Taxonomy" id="663202"/>
    <lineage>
        <taxon>Eukaryota</taxon>
        <taxon>Fungi</taxon>
        <taxon>Dikarya</taxon>
        <taxon>Ascomycota</taxon>
        <taxon>Pezizomycotina</taxon>
        <taxon>Eurotiomycetes</taxon>
        <taxon>Eurotiomycetidae</taxon>
        <taxon>Onygenales</taxon>
        <taxon>Arthrodermataceae</taxon>
        <taxon>Trichophyton</taxon>
    </lineage>
</organism>
<gene>
    <name type="primary">SUB3</name>
    <name type="ORF">TRV_07976</name>
</gene>
<keyword id="KW-0325">Glycoprotein</keyword>
<keyword id="KW-0378">Hydrolase</keyword>
<keyword id="KW-0645">Protease</keyword>
<keyword id="KW-0964">Secreted</keyword>
<keyword id="KW-0720">Serine protease</keyword>
<keyword id="KW-0732">Signal</keyword>
<keyword id="KW-0843">Virulence</keyword>
<keyword id="KW-0865">Zymogen</keyword>
<evidence type="ECO:0000250" key="1"/>
<evidence type="ECO:0000255" key="2"/>
<evidence type="ECO:0000255" key="3">
    <source>
        <dbReference type="PROSITE-ProRule" id="PRU01240"/>
    </source>
</evidence>
<evidence type="ECO:0000305" key="4"/>
<sequence length="397" mass="41015">MGCIKVISVFLAAIAAVDARAFFHNRGGNDVIPNSYIVVMKDGVTAEDFDSHISSVAATHSLNKAKRGSETVGHKDSFNINGWRAYNGHFDEATIESILKDDKVNYVEHDRVVKLAALTTQPNAPTWGLGRVSHKAPGNKDFVYDSSAGQGITIYGVDTGIDIRHPEFAGRIRWGTNTVDNDNTDGNGHGTHTAGTFAGTTYGVAKKANIVAVKVLSAGGSGSTSGVIKGIDWCVTDARSKNALGKAALNLSLGGSFSQASNDAVTRAQEAGIFVAVAAGNDNRDAKNSSPASAPAVCTAASSTIDDQKSSFSNWGTIVDIYAPGSNILSAAPGGGTRTLSGTSMASPHVCGVGAAMLAQGVSVAQACDRLKQIGNAVIRNPGTGTTNRLLYNGSGR</sequence>